<feature type="chain" id="PRO_0000144869" description="Putative HTH-type transcriptional regulatory protein TV0294">
    <location>
        <begin position="1"/>
        <end position="312"/>
    </location>
</feature>
<feature type="domain" description="HTH cro/C1-type" evidence="1">
    <location>
        <begin position="133"/>
        <end position="186"/>
    </location>
</feature>
<feature type="DNA-binding region" description="H-T-H motif" evidence="1">
    <location>
        <begin position="144"/>
        <end position="163"/>
    </location>
</feature>
<proteinExistence type="inferred from homology"/>
<comment type="sequence caution" evidence="2">
    <conflict type="erroneous initiation">
        <sequence resource="EMBL-CDS" id="BAB59436"/>
    </conflict>
</comment>
<protein>
    <recommendedName>
        <fullName evidence="1">Putative HTH-type transcriptional regulatory protein TV0294</fullName>
    </recommendedName>
</protein>
<organism>
    <name type="scientific">Thermoplasma volcanium (strain ATCC 51530 / DSM 4299 / JCM 9571 / NBRC 15438 / GSS1)</name>
    <dbReference type="NCBI Taxonomy" id="273116"/>
    <lineage>
        <taxon>Archaea</taxon>
        <taxon>Methanobacteriati</taxon>
        <taxon>Thermoplasmatota</taxon>
        <taxon>Thermoplasmata</taxon>
        <taxon>Thermoplasmatales</taxon>
        <taxon>Thermoplasmataceae</taxon>
        <taxon>Thermoplasma</taxon>
    </lineage>
</organism>
<reference key="1">
    <citation type="journal article" date="2000" name="Proc. Natl. Acad. Sci. U.S.A.">
        <title>Archaeal adaptation to higher temperatures revealed by genomic sequence of Thermoplasma volcanium.</title>
        <authorList>
            <person name="Kawashima T."/>
            <person name="Amano N."/>
            <person name="Koike H."/>
            <person name="Makino S."/>
            <person name="Higuchi S."/>
            <person name="Kawashima-Ohya Y."/>
            <person name="Watanabe K."/>
            <person name="Yamazaki M."/>
            <person name="Kanehori K."/>
            <person name="Kawamoto T."/>
            <person name="Nunoshiba T."/>
            <person name="Yamamoto Y."/>
            <person name="Aramaki H."/>
            <person name="Makino K."/>
            <person name="Suzuki M."/>
        </authorList>
    </citation>
    <scope>NUCLEOTIDE SEQUENCE [LARGE SCALE GENOMIC DNA]</scope>
    <source>
        <strain>ATCC 51530 / DSM 4299 / JCM 9571 / NBRC 15438 / GSS1</strain>
    </source>
</reference>
<evidence type="ECO:0000255" key="1">
    <source>
        <dbReference type="HAMAP-Rule" id="MF_00584"/>
    </source>
</evidence>
<evidence type="ECO:0000305" key="2"/>
<accession>Q97C11</accession>
<keyword id="KW-0238">DNA-binding</keyword>
<keyword id="KW-0804">Transcription</keyword>
<keyword id="KW-0805">Transcription regulation</keyword>
<gene>
    <name type="ordered locus">TV0294</name>
    <name type="ORF">TVG0304564</name>
</gene>
<name>Y294_THEVO</name>
<dbReference type="EMBL" id="BA000011">
    <property type="protein sequence ID" value="BAB59436.1"/>
    <property type="status" value="ALT_INIT"/>
    <property type="molecule type" value="Genomic_DNA"/>
</dbReference>
<dbReference type="RefSeq" id="WP_010916549.1">
    <property type="nucleotide sequence ID" value="NC_002689.2"/>
</dbReference>
<dbReference type="SMR" id="Q97C11"/>
<dbReference type="STRING" id="273116.gene:9381068"/>
<dbReference type="PaxDb" id="273116-14324509"/>
<dbReference type="GeneID" id="1440807"/>
<dbReference type="KEGG" id="tvo:TVG0304564"/>
<dbReference type="eggNOG" id="arCOG04152">
    <property type="taxonomic scope" value="Archaea"/>
</dbReference>
<dbReference type="HOGENOM" id="CLU_075726_0_0_2"/>
<dbReference type="OrthoDB" id="31424at2157"/>
<dbReference type="PhylomeDB" id="Q97C11"/>
<dbReference type="Proteomes" id="UP000001017">
    <property type="component" value="Chromosome"/>
</dbReference>
<dbReference type="GO" id="GO:0003677">
    <property type="term" value="F:DNA binding"/>
    <property type="evidence" value="ECO:0007669"/>
    <property type="project" value="UniProtKB-KW"/>
</dbReference>
<dbReference type="GO" id="GO:0003700">
    <property type="term" value="F:DNA-binding transcription factor activity"/>
    <property type="evidence" value="ECO:0007669"/>
    <property type="project" value="UniProtKB-UniRule"/>
</dbReference>
<dbReference type="CDD" id="cd00093">
    <property type="entry name" value="HTH_XRE"/>
    <property type="match status" value="1"/>
</dbReference>
<dbReference type="Gene3D" id="1.10.260.40">
    <property type="entry name" value="lambda repressor-like DNA-binding domains"/>
    <property type="match status" value="1"/>
</dbReference>
<dbReference type="HAMAP" id="MF_00584">
    <property type="entry name" value="HTH_type_cro_C1"/>
    <property type="match status" value="1"/>
</dbReference>
<dbReference type="InterPro" id="IPR020886">
    <property type="entry name" value="Arc_TR_HTH"/>
</dbReference>
<dbReference type="InterPro" id="IPR001387">
    <property type="entry name" value="Cro/C1-type_HTH"/>
</dbReference>
<dbReference type="InterPro" id="IPR010982">
    <property type="entry name" value="Lambda_DNA-bd_dom_sf"/>
</dbReference>
<dbReference type="NCBIfam" id="NF003162">
    <property type="entry name" value="PRK04140.1"/>
    <property type="match status" value="1"/>
</dbReference>
<dbReference type="Pfam" id="PF01381">
    <property type="entry name" value="HTH_3"/>
    <property type="match status" value="1"/>
</dbReference>
<dbReference type="SMART" id="SM00530">
    <property type="entry name" value="HTH_XRE"/>
    <property type="match status" value="1"/>
</dbReference>
<dbReference type="SUPFAM" id="SSF47413">
    <property type="entry name" value="lambda repressor-like DNA-binding domains"/>
    <property type="match status" value="1"/>
</dbReference>
<dbReference type="PROSITE" id="PS50943">
    <property type="entry name" value="HTH_CROC1"/>
    <property type="match status" value="1"/>
</dbReference>
<sequence>MEDRREALISKLMNMLVENGFSVSGTGFQPVATFDIVARRDVERYILKVLYNIDTLKQSTAYQLIKLAKLLRATAAIIGERTGNGQLEDGVVYYRHGVPISSVNTFESYLNGERPYIYSGPGGFYVRINGELLRERRNELNLSIGNISSYLGVSRRSVSLYENGSAATIDIFIRLRNILKADIVDHIDLFRINSTEINFEEKISDEYIARIIWLLQKYGLDTRPIFKVPFDIVAKDSDEISLIAALIGDAPEPERVRILKKISDVFEDDAFLVSKSNTYRESIGGCAVLTISDLESIEDKDALIGKIEKRAK</sequence>